<gene>
    <name evidence="1" type="primary">rplB</name>
    <name evidence="1" type="synonym">rpl2</name>
    <name type="ordered locus">glr0903</name>
</gene>
<accession>Q7NM65</accession>
<name>RL2_GLOVI</name>
<feature type="chain" id="PRO_0000129565" description="Large ribosomal subunit protein uL2">
    <location>
        <begin position="1"/>
        <end position="280"/>
    </location>
</feature>
<feature type="region of interest" description="Disordered" evidence="2">
    <location>
        <begin position="1"/>
        <end position="25"/>
    </location>
</feature>
<feature type="region of interest" description="Disordered" evidence="2">
    <location>
        <begin position="230"/>
        <end position="280"/>
    </location>
</feature>
<feature type="compositionally biased region" description="Basic residues" evidence="2">
    <location>
        <begin position="257"/>
        <end position="280"/>
    </location>
</feature>
<evidence type="ECO:0000255" key="1">
    <source>
        <dbReference type="HAMAP-Rule" id="MF_01320"/>
    </source>
</evidence>
<evidence type="ECO:0000256" key="2">
    <source>
        <dbReference type="SAM" id="MobiDB-lite"/>
    </source>
</evidence>
<evidence type="ECO:0000305" key="3"/>
<keyword id="KW-1185">Reference proteome</keyword>
<keyword id="KW-0687">Ribonucleoprotein</keyword>
<keyword id="KW-0689">Ribosomal protein</keyword>
<keyword id="KW-0694">RNA-binding</keyword>
<keyword id="KW-0699">rRNA-binding</keyword>
<dbReference type="EMBL" id="BA000045">
    <property type="protein sequence ID" value="BAC88844.1"/>
    <property type="molecule type" value="Genomic_DNA"/>
</dbReference>
<dbReference type="RefSeq" id="NP_923849.1">
    <property type="nucleotide sequence ID" value="NC_005125.1"/>
</dbReference>
<dbReference type="RefSeq" id="WP_011140905.1">
    <property type="nucleotide sequence ID" value="NC_005125.1"/>
</dbReference>
<dbReference type="SMR" id="Q7NM65"/>
<dbReference type="FunCoup" id="Q7NM65">
    <property type="interactions" value="318"/>
</dbReference>
<dbReference type="STRING" id="251221.gene:10758381"/>
<dbReference type="EnsemblBacteria" id="BAC88844">
    <property type="protein sequence ID" value="BAC88844"/>
    <property type="gene ID" value="BAC88844"/>
</dbReference>
<dbReference type="KEGG" id="gvi:glr0903"/>
<dbReference type="PATRIC" id="fig|251221.4.peg.922"/>
<dbReference type="eggNOG" id="COG0090">
    <property type="taxonomic scope" value="Bacteria"/>
</dbReference>
<dbReference type="HOGENOM" id="CLU_036235_2_1_3"/>
<dbReference type="InParanoid" id="Q7NM65"/>
<dbReference type="OrthoDB" id="9778722at2"/>
<dbReference type="PhylomeDB" id="Q7NM65"/>
<dbReference type="Proteomes" id="UP000000557">
    <property type="component" value="Chromosome"/>
</dbReference>
<dbReference type="GO" id="GO:0015934">
    <property type="term" value="C:large ribosomal subunit"/>
    <property type="evidence" value="ECO:0007669"/>
    <property type="project" value="InterPro"/>
</dbReference>
<dbReference type="GO" id="GO:0003723">
    <property type="term" value="F:RNA binding"/>
    <property type="evidence" value="ECO:0000318"/>
    <property type="project" value="GO_Central"/>
</dbReference>
<dbReference type="GO" id="GO:0019843">
    <property type="term" value="F:rRNA binding"/>
    <property type="evidence" value="ECO:0007669"/>
    <property type="project" value="UniProtKB-UniRule"/>
</dbReference>
<dbReference type="GO" id="GO:0003735">
    <property type="term" value="F:structural constituent of ribosome"/>
    <property type="evidence" value="ECO:0000318"/>
    <property type="project" value="GO_Central"/>
</dbReference>
<dbReference type="GO" id="GO:0016740">
    <property type="term" value="F:transferase activity"/>
    <property type="evidence" value="ECO:0007669"/>
    <property type="project" value="InterPro"/>
</dbReference>
<dbReference type="GO" id="GO:0002181">
    <property type="term" value="P:cytoplasmic translation"/>
    <property type="evidence" value="ECO:0000318"/>
    <property type="project" value="GO_Central"/>
</dbReference>
<dbReference type="FunFam" id="2.30.30.30:FF:000001">
    <property type="entry name" value="50S ribosomal protein L2"/>
    <property type="match status" value="1"/>
</dbReference>
<dbReference type="FunFam" id="2.40.50.140:FF:000003">
    <property type="entry name" value="50S ribosomal protein L2"/>
    <property type="match status" value="1"/>
</dbReference>
<dbReference type="FunFam" id="4.10.950.10:FF:000001">
    <property type="entry name" value="50S ribosomal protein L2"/>
    <property type="match status" value="1"/>
</dbReference>
<dbReference type="Gene3D" id="2.30.30.30">
    <property type="match status" value="1"/>
</dbReference>
<dbReference type="Gene3D" id="2.40.50.140">
    <property type="entry name" value="Nucleic acid-binding proteins"/>
    <property type="match status" value="1"/>
</dbReference>
<dbReference type="Gene3D" id="4.10.950.10">
    <property type="entry name" value="Ribosomal protein L2, domain 3"/>
    <property type="match status" value="1"/>
</dbReference>
<dbReference type="HAMAP" id="MF_01320_B">
    <property type="entry name" value="Ribosomal_uL2_B"/>
    <property type="match status" value="1"/>
</dbReference>
<dbReference type="InterPro" id="IPR012340">
    <property type="entry name" value="NA-bd_OB-fold"/>
</dbReference>
<dbReference type="InterPro" id="IPR014722">
    <property type="entry name" value="Rib_uL2_dom2"/>
</dbReference>
<dbReference type="InterPro" id="IPR002171">
    <property type="entry name" value="Ribosomal_uL2"/>
</dbReference>
<dbReference type="InterPro" id="IPR005880">
    <property type="entry name" value="Ribosomal_uL2_bac/org-type"/>
</dbReference>
<dbReference type="InterPro" id="IPR022669">
    <property type="entry name" value="Ribosomal_uL2_C"/>
</dbReference>
<dbReference type="InterPro" id="IPR022671">
    <property type="entry name" value="Ribosomal_uL2_CS"/>
</dbReference>
<dbReference type="InterPro" id="IPR014726">
    <property type="entry name" value="Ribosomal_uL2_dom3"/>
</dbReference>
<dbReference type="InterPro" id="IPR022666">
    <property type="entry name" value="Ribosomal_uL2_RNA-bd_dom"/>
</dbReference>
<dbReference type="InterPro" id="IPR008991">
    <property type="entry name" value="Translation_prot_SH3-like_sf"/>
</dbReference>
<dbReference type="NCBIfam" id="TIGR01171">
    <property type="entry name" value="rplB_bact"/>
    <property type="match status" value="1"/>
</dbReference>
<dbReference type="PANTHER" id="PTHR13691:SF5">
    <property type="entry name" value="LARGE RIBOSOMAL SUBUNIT PROTEIN UL2M"/>
    <property type="match status" value="1"/>
</dbReference>
<dbReference type="PANTHER" id="PTHR13691">
    <property type="entry name" value="RIBOSOMAL PROTEIN L2"/>
    <property type="match status" value="1"/>
</dbReference>
<dbReference type="Pfam" id="PF00181">
    <property type="entry name" value="Ribosomal_L2"/>
    <property type="match status" value="1"/>
</dbReference>
<dbReference type="Pfam" id="PF03947">
    <property type="entry name" value="Ribosomal_L2_C"/>
    <property type="match status" value="1"/>
</dbReference>
<dbReference type="PIRSF" id="PIRSF002158">
    <property type="entry name" value="Ribosomal_L2"/>
    <property type="match status" value="1"/>
</dbReference>
<dbReference type="SMART" id="SM01383">
    <property type="entry name" value="Ribosomal_L2"/>
    <property type="match status" value="1"/>
</dbReference>
<dbReference type="SMART" id="SM01382">
    <property type="entry name" value="Ribosomal_L2_C"/>
    <property type="match status" value="1"/>
</dbReference>
<dbReference type="SUPFAM" id="SSF50249">
    <property type="entry name" value="Nucleic acid-binding proteins"/>
    <property type="match status" value="1"/>
</dbReference>
<dbReference type="SUPFAM" id="SSF50104">
    <property type="entry name" value="Translation proteins SH3-like domain"/>
    <property type="match status" value="1"/>
</dbReference>
<dbReference type="PROSITE" id="PS00467">
    <property type="entry name" value="RIBOSOMAL_L2"/>
    <property type="match status" value="1"/>
</dbReference>
<organism>
    <name type="scientific">Gloeobacter violaceus (strain ATCC 29082 / PCC 7421)</name>
    <dbReference type="NCBI Taxonomy" id="251221"/>
    <lineage>
        <taxon>Bacteria</taxon>
        <taxon>Bacillati</taxon>
        <taxon>Cyanobacteriota</taxon>
        <taxon>Cyanophyceae</taxon>
        <taxon>Gloeobacterales</taxon>
        <taxon>Gloeobacteraceae</taxon>
        <taxon>Gloeobacter</taxon>
    </lineage>
</organism>
<reference key="1">
    <citation type="journal article" date="2003" name="DNA Res.">
        <title>Complete genome structure of Gloeobacter violaceus PCC 7421, a cyanobacterium that lacks thylakoids.</title>
        <authorList>
            <person name="Nakamura Y."/>
            <person name="Kaneko T."/>
            <person name="Sato S."/>
            <person name="Mimuro M."/>
            <person name="Miyashita H."/>
            <person name="Tsuchiya T."/>
            <person name="Sasamoto S."/>
            <person name="Watanabe A."/>
            <person name="Kawashima K."/>
            <person name="Kishida Y."/>
            <person name="Kiyokawa C."/>
            <person name="Kohara M."/>
            <person name="Matsumoto M."/>
            <person name="Matsuno A."/>
            <person name="Nakazaki N."/>
            <person name="Shimpo S."/>
            <person name="Takeuchi C."/>
            <person name="Yamada M."/>
            <person name="Tabata S."/>
        </authorList>
    </citation>
    <scope>NUCLEOTIDE SEQUENCE [LARGE SCALE GENOMIC DNA]</scope>
    <source>
        <strain>ATCC 29082 / PCC 7421</strain>
    </source>
</reference>
<sequence>MGIRKYRPMTPGTRQRSGADFAEVTKSKPEKKLTKYVHRKQGRNNQGVITSRFRGGGHKRLYRFIDFKRDKRGIPAEVLAIEYDPNRNARIALVQYTDGEKRYILHPVGLKVGARISAGEDAPIELGCALPLEKLPLGSNVHNIELLPGRGGQMARAAGAVAQLMAKEGDYATLRLPSGEVRVVRKECYATLGQVGNLDAKNISIGKAGRQRWLGKRPHNRGVVMNAVDHPHGGGEGKSPIGGKPQTPWGKSALGTKTRKRRKPSSKFIIRRRKTASGRG</sequence>
<proteinExistence type="inferred from homology"/>
<protein>
    <recommendedName>
        <fullName evidence="1">Large ribosomal subunit protein uL2</fullName>
    </recommendedName>
    <alternativeName>
        <fullName evidence="3">50S ribosomal protein L2</fullName>
    </alternativeName>
</protein>
<comment type="function">
    <text evidence="1">One of the primary rRNA binding proteins. Required for association of the 30S and 50S subunits to form the 70S ribosome, for tRNA binding and peptide bond formation. It has been suggested to have peptidyltransferase activity; this is somewhat controversial. Makes several contacts with the 16S rRNA in the 70S ribosome.</text>
</comment>
<comment type="subunit">
    <text evidence="1">Part of the 50S ribosomal subunit. Forms a bridge to the 30S subunit in the 70S ribosome.</text>
</comment>
<comment type="similarity">
    <text evidence="1">Belongs to the universal ribosomal protein uL2 family.</text>
</comment>